<dbReference type="EMBL" id="AC103621">
    <property type="status" value="NOT_ANNOTATED_CDS"/>
    <property type="molecule type" value="Genomic_DNA"/>
</dbReference>
<dbReference type="EMBL" id="BC096038">
    <property type="protein sequence ID" value="AAH96038.1"/>
    <property type="molecule type" value="mRNA"/>
</dbReference>
<dbReference type="EMBL" id="AK030002">
    <property type="protein sequence ID" value="BAC26728.1"/>
    <property type="molecule type" value="mRNA"/>
</dbReference>
<dbReference type="CCDS" id="CCDS19270.1"/>
<dbReference type="RefSeq" id="NP_776125.2">
    <property type="nucleotide sequence ID" value="NM_173764.3"/>
</dbReference>
<dbReference type="SMR" id="Q4VBD2"/>
<dbReference type="BioGRID" id="231097">
    <property type="interactions" value="14"/>
</dbReference>
<dbReference type="FunCoup" id="Q4VBD2">
    <property type="interactions" value="2730"/>
</dbReference>
<dbReference type="IntAct" id="Q4VBD2">
    <property type="interactions" value="9"/>
</dbReference>
<dbReference type="STRING" id="10090.ENSMUSP00000062110"/>
<dbReference type="GlyGen" id="Q4VBD2">
    <property type="glycosylation" value="1 site"/>
</dbReference>
<dbReference type="iPTMnet" id="Q4VBD2"/>
<dbReference type="PhosphoSitePlus" id="Q4VBD2"/>
<dbReference type="SwissPalm" id="Q4VBD2"/>
<dbReference type="jPOST" id="Q4VBD2"/>
<dbReference type="PaxDb" id="10090-ENSMUSP00000062110"/>
<dbReference type="PeptideAtlas" id="Q4VBD2"/>
<dbReference type="ProteomicsDB" id="254816"/>
<dbReference type="Pumba" id="Q4VBD2"/>
<dbReference type="Antibodypedia" id="54863">
    <property type="antibodies" value="85 antibodies from 19 providers"/>
</dbReference>
<dbReference type="DNASU" id="231225"/>
<dbReference type="Ensembl" id="ENSMUST00000055128.12">
    <property type="protein sequence ID" value="ENSMUSP00000062110.8"/>
    <property type="gene ID" value="ENSMUSG00000046985.12"/>
</dbReference>
<dbReference type="GeneID" id="231225"/>
<dbReference type="KEGG" id="mmu:231225"/>
<dbReference type="UCSC" id="uc008xin.1">
    <property type="organism name" value="mouse"/>
</dbReference>
<dbReference type="AGR" id="MGI:2683537"/>
<dbReference type="CTD" id="202018"/>
<dbReference type="MGI" id="MGI:2683537">
    <property type="gene designation" value="Tapt1"/>
</dbReference>
<dbReference type="VEuPathDB" id="HostDB:ENSMUSG00000046985"/>
<dbReference type="eggNOG" id="KOG2490">
    <property type="taxonomic scope" value="Eukaryota"/>
</dbReference>
<dbReference type="GeneTree" id="ENSGT00390000010628"/>
<dbReference type="HOGENOM" id="CLU_003655_3_0_1"/>
<dbReference type="InParanoid" id="Q4VBD2"/>
<dbReference type="OMA" id="TIMLIRV"/>
<dbReference type="OrthoDB" id="29023at2759"/>
<dbReference type="PhylomeDB" id="Q4VBD2"/>
<dbReference type="TreeFam" id="TF105962"/>
<dbReference type="BioGRID-ORCS" id="231225">
    <property type="hits" value="10 hits in 78 CRISPR screens"/>
</dbReference>
<dbReference type="ChiTaRS" id="Tapt1">
    <property type="organism name" value="mouse"/>
</dbReference>
<dbReference type="PRO" id="PR:Q4VBD2"/>
<dbReference type="Proteomes" id="UP000000589">
    <property type="component" value="Chromosome 5"/>
</dbReference>
<dbReference type="RNAct" id="Q4VBD2">
    <property type="molecule type" value="protein"/>
</dbReference>
<dbReference type="Bgee" id="ENSMUSG00000046985">
    <property type="expression patterns" value="Expressed in facial nucleus and 227 other cell types or tissues"/>
</dbReference>
<dbReference type="ExpressionAtlas" id="Q4VBD2">
    <property type="expression patterns" value="baseline and differential"/>
</dbReference>
<dbReference type="GO" id="GO:0005813">
    <property type="term" value="C:centrosome"/>
    <property type="evidence" value="ECO:0000250"/>
    <property type="project" value="UniProtKB"/>
</dbReference>
<dbReference type="GO" id="GO:0036064">
    <property type="term" value="C:ciliary basal body"/>
    <property type="evidence" value="ECO:0000250"/>
    <property type="project" value="UniProtKB"/>
</dbReference>
<dbReference type="GO" id="GO:0005829">
    <property type="term" value="C:cytosol"/>
    <property type="evidence" value="ECO:0007669"/>
    <property type="project" value="Ensembl"/>
</dbReference>
<dbReference type="GO" id="GO:0016020">
    <property type="term" value="C:membrane"/>
    <property type="evidence" value="ECO:0007669"/>
    <property type="project" value="UniProtKB-SubCell"/>
</dbReference>
<dbReference type="GO" id="GO:0005654">
    <property type="term" value="C:nucleoplasm"/>
    <property type="evidence" value="ECO:0007669"/>
    <property type="project" value="Ensembl"/>
</dbReference>
<dbReference type="GO" id="GO:0051216">
    <property type="term" value="P:cartilage development"/>
    <property type="evidence" value="ECO:0007669"/>
    <property type="project" value="UniProtKB-KW"/>
</dbReference>
<dbReference type="GO" id="GO:0030030">
    <property type="term" value="P:cell projection organization"/>
    <property type="evidence" value="ECO:0007669"/>
    <property type="project" value="UniProtKB-KW"/>
</dbReference>
<dbReference type="GO" id="GO:0048706">
    <property type="term" value="P:embryonic skeletal system development"/>
    <property type="evidence" value="ECO:0000315"/>
    <property type="project" value="MGI"/>
</dbReference>
<dbReference type="GO" id="GO:0014032">
    <property type="term" value="P:neural crest cell development"/>
    <property type="evidence" value="ECO:0000250"/>
    <property type="project" value="UniProtKB"/>
</dbReference>
<dbReference type="GO" id="GO:0001503">
    <property type="term" value="P:ossification"/>
    <property type="evidence" value="ECO:0007669"/>
    <property type="project" value="UniProtKB-KW"/>
</dbReference>
<dbReference type="GO" id="GO:1903012">
    <property type="term" value="P:positive regulation of bone development"/>
    <property type="evidence" value="ECO:0000250"/>
    <property type="project" value="UniProtKB"/>
</dbReference>
<dbReference type="GO" id="GO:0061036">
    <property type="term" value="P:positive regulation of cartilage development"/>
    <property type="evidence" value="ECO:0000250"/>
    <property type="project" value="UniProtKB"/>
</dbReference>
<dbReference type="GO" id="GO:0045724">
    <property type="term" value="P:positive regulation of cilium assembly"/>
    <property type="evidence" value="ECO:0000250"/>
    <property type="project" value="UniProtKB"/>
</dbReference>
<dbReference type="InterPro" id="IPR008010">
    <property type="entry name" value="Tatp1"/>
</dbReference>
<dbReference type="PANTHER" id="PTHR13317">
    <property type="entry name" value="TRANSMEMBRANE ANTERIOR POSTERIOR TRANSFORMATION PROTEIN 1 HOMOLOG"/>
    <property type="match status" value="1"/>
</dbReference>
<dbReference type="PANTHER" id="PTHR13317:SF4">
    <property type="entry name" value="TRANSMEMBRANE ANTERIOR POSTERIOR TRANSFORMATION PROTEIN 1 HOMOLOG"/>
    <property type="match status" value="1"/>
</dbReference>
<dbReference type="Pfam" id="PF05346">
    <property type="entry name" value="DUF747"/>
    <property type="match status" value="1"/>
</dbReference>
<protein>
    <recommendedName>
        <fullName>Transmembrane anterior posterior transformation protein 1</fullName>
    </recommendedName>
</protein>
<keyword id="KW-0007">Acetylation</keyword>
<keyword id="KW-0966">Cell projection</keyword>
<keyword id="KW-0891">Chondrogenesis</keyword>
<keyword id="KW-0969">Cilium</keyword>
<keyword id="KW-0970">Cilium biogenesis/degradation</keyword>
<keyword id="KW-0963">Cytoplasm</keyword>
<keyword id="KW-0206">Cytoskeleton</keyword>
<keyword id="KW-0217">Developmental protein</keyword>
<keyword id="KW-0221">Differentiation</keyword>
<keyword id="KW-0472">Membrane</keyword>
<keyword id="KW-0892">Osteogenesis</keyword>
<keyword id="KW-0597">Phosphoprotein</keyword>
<keyword id="KW-1185">Reference proteome</keyword>
<keyword id="KW-0812">Transmembrane</keyword>
<keyword id="KW-1133">Transmembrane helix</keyword>
<proteinExistence type="evidence at protein level"/>
<gene>
    <name type="primary">Tapt1</name>
</gene>
<evidence type="ECO:0000250" key="1">
    <source>
        <dbReference type="UniProtKB" id="A2BIE7"/>
    </source>
</evidence>
<evidence type="ECO:0000250" key="2">
    <source>
        <dbReference type="UniProtKB" id="Q6NXT6"/>
    </source>
</evidence>
<evidence type="ECO:0000255" key="3"/>
<evidence type="ECO:0000256" key="4">
    <source>
        <dbReference type="SAM" id="MobiDB-lite"/>
    </source>
</evidence>
<evidence type="ECO:0000269" key="5">
    <source>
    </source>
</evidence>
<evidence type="ECO:0000305" key="6"/>
<evidence type="ECO:0007744" key="7">
    <source>
    </source>
</evidence>
<organism>
    <name type="scientific">Mus musculus</name>
    <name type="common">Mouse</name>
    <dbReference type="NCBI Taxonomy" id="10090"/>
    <lineage>
        <taxon>Eukaryota</taxon>
        <taxon>Metazoa</taxon>
        <taxon>Chordata</taxon>
        <taxon>Craniata</taxon>
        <taxon>Vertebrata</taxon>
        <taxon>Euteleostomi</taxon>
        <taxon>Mammalia</taxon>
        <taxon>Eutheria</taxon>
        <taxon>Euarchontoglires</taxon>
        <taxon>Glires</taxon>
        <taxon>Rodentia</taxon>
        <taxon>Myomorpha</taxon>
        <taxon>Muroidea</taxon>
        <taxon>Muridae</taxon>
        <taxon>Murinae</taxon>
        <taxon>Mus</taxon>
        <taxon>Mus</taxon>
    </lineage>
</organism>
<reference key="1">
    <citation type="journal article" date="2009" name="PLoS Biol.">
        <title>Lineage-specific biology revealed by a finished genome assembly of the mouse.</title>
        <authorList>
            <person name="Church D.M."/>
            <person name="Goodstadt L."/>
            <person name="Hillier L.W."/>
            <person name="Zody M.C."/>
            <person name="Goldstein S."/>
            <person name="She X."/>
            <person name="Bult C.J."/>
            <person name="Agarwala R."/>
            <person name="Cherry J.L."/>
            <person name="DiCuccio M."/>
            <person name="Hlavina W."/>
            <person name="Kapustin Y."/>
            <person name="Meric P."/>
            <person name="Maglott D."/>
            <person name="Birtle Z."/>
            <person name="Marques A.C."/>
            <person name="Graves T."/>
            <person name="Zhou S."/>
            <person name="Teague B."/>
            <person name="Potamousis K."/>
            <person name="Churas C."/>
            <person name="Place M."/>
            <person name="Herschleb J."/>
            <person name="Runnheim R."/>
            <person name="Forrest D."/>
            <person name="Amos-Landgraf J."/>
            <person name="Schwartz D.C."/>
            <person name="Cheng Z."/>
            <person name="Lindblad-Toh K."/>
            <person name="Eichler E.E."/>
            <person name="Ponting C.P."/>
        </authorList>
    </citation>
    <scope>NUCLEOTIDE SEQUENCE [LARGE SCALE GENOMIC DNA]</scope>
    <source>
        <strain>C57BL/6J</strain>
    </source>
</reference>
<reference key="2">
    <citation type="journal article" date="2004" name="Genome Res.">
        <title>The status, quality, and expansion of the NIH full-length cDNA project: the Mammalian Gene Collection (MGC).</title>
        <authorList>
            <consortium name="The MGC Project Team"/>
        </authorList>
    </citation>
    <scope>NUCLEOTIDE SEQUENCE [LARGE SCALE MRNA] OF 174-564</scope>
    <source>
        <strain>C57BL/6J</strain>
        <tissue>Eye</tissue>
    </source>
</reference>
<reference key="3">
    <citation type="journal article" date="2005" name="Science">
        <title>The transcriptional landscape of the mammalian genome.</title>
        <authorList>
            <person name="Carninci P."/>
            <person name="Kasukawa T."/>
            <person name="Katayama S."/>
            <person name="Gough J."/>
            <person name="Frith M.C."/>
            <person name="Maeda N."/>
            <person name="Oyama R."/>
            <person name="Ravasi T."/>
            <person name="Lenhard B."/>
            <person name="Wells C."/>
            <person name="Kodzius R."/>
            <person name="Shimokawa K."/>
            <person name="Bajic V.B."/>
            <person name="Brenner S.E."/>
            <person name="Batalov S."/>
            <person name="Forrest A.R."/>
            <person name="Zavolan M."/>
            <person name="Davis M.J."/>
            <person name="Wilming L.G."/>
            <person name="Aidinis V."/>
            <person name="Allen J.E."/>
            <person name="Ambesi-Impiombato A."/>
            <person name="Apweiler R."/>
            <person name="Aturaliya R.N."/>
            <person name="Bailey T.L."/>
            <person name="Bansal M."/>
            <person name="Baxter L."/>
            <person name="Beisel K.W."/>
            <person name="Bersano T."/>
            <person name="Bono H."/>
            <person name="Chalk A.M."/>
            <person name="Chiu K.P."/>
            <person name="Choudhary V."/>
            <person name="Christoffels A."/>
            <person name="Clutterbuck D.R."/>
            <person name="Crowe M.L."/>
            <person name="Dalla E."/>
            <person name="Dalrymple B.P."/>
            <person name="de Bono B."/>
            <person name="Della Gatta G."/>
            <person name="di Bernardo D."/>
            <person name="Down T."/>
            <person name="Engstrom P."/>
            <person name="Fagiolini M."/>
            <person name="Faulkner G."/>
            <person name="Fletcher C.F."/>
            <person name="Fukushima T."/>
            <person name="Furuno M."/>
            <person name="Futaki S."/>
            <person name="Gariboldi M."/>
            <person name="Georgii-Hemming P."/>
            <person name="Gingeras T.R."/>
            <person name="Gojobori T."/>
            <person name="Green R.E."/>
            <person name="Gustincich S."/>
            <person name="Harbers M."/>
            <person name="Hayashi Y."/>
            <person name="Hensch T.K."/>
            <person name="Hirokawa N."/>
            <person name="Hill D."/>
            <person name="Huminiecki L."/>
            <person name="Iacono M."/>
            <person name="Ikeo K."/>
            <person name="Iwama A."/>
            <person name="Ishikawa T."/>
            <person name="Jakt M."/>
            <person name="Kanapin A."/>
            <person name="Katoh M."/>
            <person name="Kawasawa Y."/>
            <person name="Kelso J."/>
            <person name="Kitamura H."/>
            <person name="Kitano H."/>
            <person name="Kollias G."/>
            <person name="Krishnan S.P."/>
            <person name="Kruger A."/>
            <person name="Kummerfeld S.K."/>
            <person name="Kurochkin I.V."/>
            <person name="Lareau L.F."/>
            <person name="Lazarevic D."/>
            <person name="Lipovich L."/>
            <person name="Liu J."/>
            <person name="Liuni S."/>
            <person name="McWilliam S."/>
            <person name="Madan Babu M."/>
            <person name="Madera M."/>
            <person name="Marchionni L."/>
            <person name="Matsuda H."/>
            <person name="Matsuzawa S."/>
            <person name="Miki H."/>
            <person name="Mignone F."/>
            <person name="Miyake S."/>
            <person name="Morris K."/>
            <person name="Mottagui-Tabar S."/>
            <person name="Mulder N."/>
            <person name="Nakano N."/>
            <person name="Nakauchi H."/>
            <person name="Ng P."/>
            <person name="Nilsson R."/>
            <person name="Nishiguchi S."/>
            <person name="Nishikawa S."/>
            <person name="Nori F."/>
            <person name="Ohara O."/>
            <person name="Okazaki Y."/>
            <person name="Orlando V."/>
            <person name="Pang K.C."/>
            <person name="Pavan W.J."/>
            <person name="Pavesi G."/>
            <person name="Pesole G."/>
            <person name="Petrovsky N."/>
            <person name="Piazza S."/>
            <person name="Reed J."/>
            <person name="Reid J.F."/>
            <person name="Ring B.Z."/>
            <person name="Ringwald M."/>
            <person name="Rost B."/>
            <person name="Ruan Y."/>
            <person name="Salzberg S.L."/>
            <person name="Sandelin A."/>
            <person name="Schneider C."/>
            <person name="Schoenbach C."/>
            <person name="Sekiguchi K."/>
            <person name="Semple C.A."/>
            <person name="Seno S."/>
            <person name="Sessa L."/>
            <person name="Sheng Y."/>
            <person name="Shibata Y."/>
            <person name="Shimada H."/>
            <person name="Shimada K."/>
            <person name="Silva D."/>
            <person name="Sinclair B."/>
            <person name="Sperling S."/>
            <person name="Stupka E."/>
            <person name="Sugiura K."/>
            <person name="Sultana R."/>
            <person name="Takenaka Y."/>
            <person name="Taki K."/>
            <person name="Tammoja K."/>
            <person name="Tan S.L."/>
            <person name="Tang S."/>
            <person name="Taylor M.S."/>
            <person name="Tegner J."/>
            <person name="Teichmann S.A."/>
            <person name="Ueda H.R."/>
            <person name="van Nimwegen E."/>
            <person name="Verardo R."/>
            <person name="Wei C.L."/>
            <person name="Yagi K."/>
            <person name="Yamanishi H."/>
            <person name="Zabarovsky E."/>
            <person name="Zhu S."/>
            <person name="Zimmer A."/>
            <person name="Hide W."/>
            <person name="Bult C."/>
            <person name="Grimmond S.M."/>
            <person name="Teasdale R.D."/>
            <person name="Liu E.T."/>
            <person name="Brusic V."/>
            <person name="Quackenbush J."/>
            <person name="Wahlestedt C."/>
            <person name="Mattick J.S."/>
            <person name="Hume D.A."/>
            <person name="Kai C."/>
            <person name="Sasaki D."/>
            <person name="Tomaru Y."/>
            <person name="Fukuda S."/>
            <person name="Kanamori-Katayama M."/>
            <person name="Suzuki M."/>
            <person name="Aoki J."/>
            <person name="Arakawa T."/>
            <person name="Iida J."/>
            <person name="Imamura K."/>
            <person name="Itoh M."/>
            <person name="Kato T."/>
            <person name="Kawaji H."/>
            <person name="Kawagashira N."/>
            <person name="Kawashima T."/>
            <person name="Kojima M."/>
            <person name="Kondo S."/>
            <person name="Konno H."/>
            <person name="Nakano K."/>
            <person name="Ninomiya N."/>
            <person name="Nishio T."/>
            <person name="Okada M."/>
            <person name="Plessy C."/>
            <person name="Shibata K."/>
            <person name="Shiraki T."/>
            <person name="Suzuki S."/>
            <person name="Tagami M."/>
            <person name="Waki K."/>
            <person name="Watahiki A."/>
            <person name="Okamura-Oho Y."/>
            <person name="Suzuki H."/>
            <person name="Kawai J."/>
            <person name="Hayashizaki Y."/>
        </authorList>
    </citation>
    <scope>NUCLEOTIDE SEQUENCE [LARGE SCALE MRNA] OF 254-564</scope>
    <source>
        <strain>C57BL/6J</strain>
        <tissue>Testis</tissue>
    </source>
</reference>
<reference key="4">
    <citation type="journal article" date="2007" name="Genetics">
        <title>Mutation of a ubiquitously expressed mouse transmembrane protein (Tapt1) causes specific skeletal homeotic transformations.</title>
        <authorList>
            <person name="Howell G.R."/>
            <person name="Shindo M."/>
            <person name="Murray S."/>
            <person name="Gridley T."/>
            <person name="Wilson L.A."/>
            <person name="Schimenti J.C."/>
        </authorList>
    </citation>
    <scope>FUNCTION</scope>
    <scope>DISRUPTION PHENOTYPE</scope>
    <scope>TISSUE SPECIFICITY</scope>
</reference>
<reference key="5">
    <citation type="journal article" date="2010" name="Cell">
        <title>A tissue-specific atlas of mouse protein phosphorylation and expression.</title>
        <authorList>
            <person name="Huttlin E.L."/>
            <person name="Jedrychowski M.P."/>
            <person name="Elias J.E."/>
            <person name="Goswami T."/>
            <person name="Rad R."/>
            <person name="Beausoleil S.A."/>
            <person name="Villen J."/>
            <person name="Haas W."/>
            <person name="Sowa M.E."/>
            <person name="Gygi S.P."/>
        </authorList>
    </citation>
    <scope>PHOSPHORYLATION [LARGE SCALE ANALYSIS] AT SER-520 AND THR-526</scope>
    <scope>IDENTIFICATION BY MASS SPECTROMETRY [LARGE SCALE ANALYSIS]</scope>
    <source>
        <tissue>Brain</tissue>
        <tissue>Heart</tissue>
        <tissue>Kidney</tissue>
        <tissue>Lung</tissue>
        <tissue>Pancreas</tissue>
        <tissue>Spleen</tissue>
        <tissue>Testis</tissue>
    </source>
</reference>
<sequence length="564" mass="63894">MAGVCDAAAPGEGGGGGADGPERTGRGEAEQPGGGGHGPAPQHTETLGFYESDRRREKRRGRAELSLLRFLSAELTRGYFLEHNEAKYTERRERVYTCMRIPRELEKLMFFGIFLCLDAFLYVFTLLPLRVFLALFRLLTLPCYGLRDRRLLQPAQVCDILKGVILVICYFMMHYVDYSMMYHLIRGQSVIKLYIIYNMLEVADRLFSSFGQDILDALYWTATEPKERKRAHIGVIPHFFMAVLYVFLHAILIMVQATTLNVAFNSHNKSLLTIMMSNNFVEIKGSVFKKFEKNNLFQMSNSDIKERFTNYVLLLIVCLRNMEQFSWNPDHLWVLFPDVCMVIASEIAVDIVKHAFITKFNDITADVYSEYRASLAFDLVSSRQKNAYTDYSDSVARRMGFIPLPLAVLLIRVVTSSIKVQGILSYACVILFYFGLISLKILNSIVLLGKSCQYVKEAKMEEKLFNPPPASTPGKPSSKSQSKGKPSQGLSTEENLSASVTSQPGHQKENVIPLLVTSNSDQFLTTPDGDEKDITQENSELKHRSSKKDLLEIDRFTICGNRID</sequence>
<feature type="initiator methionine" description="Removed" evidence="2">
    <location>
        <position position="1"/>
    </location>
</feature>
<feature type="chain" id="PRO_0000328873" description="Transmembrane anterior posterior transformation protein 1">
    <location>
        <begin position="2"/>
        <end position="564"/>
    </location>
</feature>
<feature type="transmembrane region" description="Helical" evidence="3">
    <location>
        <begin position="108"/>
        <end position="128"/>
    </location>
</feature>
<feature type="transmembrane region" description="Helical" evidence="3">
    <location>
        <begin position="154"/>
        <end position="176"/>
    </location>
</feature>
<feature type="transmembrane region" description="Helical" evidence="3">
    <location>
        <begin position="233"/>
        <end position="253"/>
    </location>
</feature>
<feature type="transmembrane region" description="Helical" evidence="3">
    <location>
        <begin position="332"/>
        <end position="352"/>
    </location>
</feature>
<feature type="transmembrane region" description="Helical" evidence="3">
    <location>
        <begin position="400"/>
        <end position="420"/>
    </location>
</feature>
<feature type="transmembrane region" description="Helical" evidence="3">
    <location>
        <begin position="429"/>
        <end position="449"/>
    </location>
</feature>
<feature type="region of interest" description="Disordered" evidence="4">
    <location>
        <begin position="1"/>
        <end position="55"/>
    </location>
</feature>
<feature type="region of interest" description="Disordered" evidence="4">
    <location>
        <begin position="464"/>
        <end position="546"/>
    </location>
</feature>
<feature type="compositionally biased region" description="Low complexity" evidence="4">
    <location>
        <begin position="1"/>
        <end position="10"/>
    </location>
</feature>
<feature type="compositionally biased region" description="Basic and acidic residues" evidence="4">
    <location>
        <begin position="20"/>
        <end position="29"/>
    </location>
</feature>
<feature type="compositionally biased region" description="Low complexity" evidence="4">
    <location>
        <begin position="473"/>
        <end position="489"/>
    </location>
</feature>
<feature type="compositionally biased region" description="Polar residues" evidence="4">
    <location>
        <begin position="490"/>
        <end position="505"/>
    </location>
</feature>
<feature type="compositionally biased region" description="Polar residues" evidence="4">
    <location>
        <begin position="516"/>
        <end position="525"/>
    </location>
</feature>
<feature type="compositionally biased region" description="Basic and acidic residues" evidence="4">
    <location>
        <begin position="532"/>
        <end position="546"/>
    </location>
</feature>
<feature type="modified residue" description="N-acetylalanine" evidence="2">
    <location>
        <position position="2"/>
    </location>
</feature>
<feature type="modified residue" description="Phosphoserine" evidence="7">
    <location>
        <position position="520"/>
    </location>
</feature>
<feature type="modified residue" description="Phosphothreonine" evidence="7">
    <location>
        <position position="526"/>
    </location>
</feature>
<comment type="function">
    <text evidence="1 2 5">Plays a role in primary cilia formation (By similarity). May act as a downstream effector of HOXC8 possibly by transducing or transmitting extracellular information required for axial skeletal patterning during development (By similarity). May be involved in cartilage and bone development (By similarity). May play a role in the differentiation of cranial neural crest cells (By similarity).</text>
</comment>
<comment type="subcellular location">
    <subcellularLocation>
        <location evidence="2">Cytoplasm</location>
        <location evidence="2">Cytoskeleton</location>
        <location evidence="2">Microtubule organizing center</location>
        <location evidence="2">Centrosome</location>
    </subcellularLocation>
    <subcellularLocation>
        <location evidence="2">Cytoplasm</location>
        <location evidence="2">Cytoskeleton</location>
        <location evidence="2">Cilium basal body</location>
    </subcellularLocation>
    <subcellularLocation>
        <location evidence="2">Membrane</location>
        <topology evidence="2">Multi-pass membrane protein</topology>
    </subcellularLocation>
</comment>
<comment type="tissue specificity">
    <text evidence="5">Ubiquitous. Expressed throughout embryo.</text>
</comment>
<comment type="disruption phenotype">
    <text evidence="5">Mice die during perinatal development and are the cause of the L5Jcs1 phenotype. They exhibit posterior-to-anterior transformations of the vertebral column midsection, similar to mice deficient for Hoxc8 and Hoxc9.</text>
</comment>
<comment type="similarity">
    <text evidence="6">Belongs to the TAPT1 family.</text>
</comment>
<accession>Q4VBD2</accession>
<accession>Q8CDI4</accession>
<name>TAPT1_MOUSE</name>